<evidence type="ECO:0000255" key="1">
    <source>
        <dbReference type="HAMAP-Rule" id="MF_00211"/>
    </source>
</evidence>
<protein>
    <recommendedName>
        <fullName evidence="1">Anthranilate phosphoribosyltransferase</fullName>
        <ecNumber evidence="1">2.4.2.18</ecNumber>
    </recommendedName>
</protein>
<proteinExistence type="inferred from homology"/>
<dbReference type="EC" id="2.4.2.18" evidence="1"/>
<dbReference type="EMBL" id="CP000077">
    <property type="protein sequence ID" value="AAY80753.1"/>
    <property type="molecule type" value="Genomic_DNA"/>
</dbReference>
<dbReference type="SMR" id="Q4J8X7"/>
<dbReference type="STRING" id="330779.Saci_1423"/>
<dbReference type="KEGG" id="sai:Saci_1423"/>
<dbReference type="PATRIC" id="fig|330779.12.peg.1371"/>
<dbReference type="eggNOG" id="arCOG02012">
    <property type="taxonomic scope" value="Archaea"/>
</dbReference>
<dbReference type="HOGENOM" id="CLU_034315_2_1_2"/>
<dbReference type="UniPathway" id="UPA00035">
    <property type="reaction ID" value="UER00041"/>
</dbReference>
<dbReference type="Proteomes" id="UP000001018">
    <property type="component" value="Chromosome"/>
</dbReference>
<dbReference type="GO" id="GO:0005829">
    <property type="term" value="C:cytosol"/>
    <property type="evidence" value="ECO:0007669"/>
    <property type="project" value="TreeGrafter"/>
</dbReference>
<dbReference type="GO" id="GO:0004048">
    <property type="term" value="F:anthranilate phosphoribosyltransferase activity"/>
    <property type="evidence" value="ECO:0007669"/>
    <property type="project" value="UniProtKB-UniRule"/>
</dbReference>
<dbReference type="GO" id="GO:0000287">
    <property type="term" value="F:magnesium ion binding"/>
    <property type="evidence" value="ECO:0007669"/>
    <property type="project" value="UniProtKB-UniRule"/>
</dbReference>
<dbReference type="GO" id="GO:0000162">
    <property type="term" value="P:L-tryptophan biosynthetic process"/>
    <property type="evidence" value="ECO:0007669"/>
    <property type="project" value="UniProtKB-UniRule"/>
</dbReference>
<dbReference type="Gene3D" id="3.40.1030.10">
    <property type="entry name" value="Nucleoside phosphorylase/phosphoribosyltransferase catalytic domain"/>
    <property type="match status" value="1"/>
</dbReference>
<dbReference type="Gene3D" id="1.20.970.10">
    <property type="entry name" value="Transferase, Pyrimidine Nucleoside Phosphorylase, Chain C"/>
    <property type="match status" value="1"/>
</dbReference>
<dbReference type="HAMAP" id="MF_00211">
    <property type="entry name" value="TrpD"/>
    <property type="match status" value="1"/>
</dbReference>
<dbReference type="InterPro" id="IPR005940">
    <property type="entry name" value="Anthranilate_Pribosyl_Tfrase"/>
</dbReference>
<dbReference type="InterPro" id="IPR000312">
    <property type="entry name" value="Glycosyl_Trfase_fam3"/>
</dbReference>
<dbReference type="InterPro" id="IPR017459">
    <property type="entry name" value="Glycosyl_Trfase_fam3_N_dom"/>
</dbReference>
<dbReference type="InterPro" id="IPR036320">
    <property type="entry name" value="Glycosyl_Trfase_fam3_N_dom_sf"/>
</dbReference>
<dbReference type="InterPro" id="IPR035902">
    <property type="entry name" value="Nuc_phospho_transferase"/>
</dbReference>
<dbReference type="NCBIfam" id="TIGR01245">
    <property type="entry name" value="trpD"/>
    <property type="match status" value="1"/>
</dbReference>
<dbReference type="PANTHER" id="PTHR43285">
    <property type="entry name" value="ANTHRANILATE PHOSPHORIBOSYLTRANSFERASE"/>
    <property type="match status" value="1"/>
</dbReference>
<dbReference type="PANTHER" id="PTHR43285:SF2">
    <property type="entry name" value="ANTHRANILATE PHOSPHORIBOSYLTRANSFERASE"/>
    <property type="match status" value="1"/>
</dbReference>
<dbReference type="Pfam" id="PF02885">
    <property type="entry name" value="Glycos_trans_3N"/>
    <property type="match status" value="1"/>
</dbReference>
<dbReference type="Pfam" id="PF00591">
    <property type="entry name" value="Glycos_transf_3"/>
    <property type="match status" value="1"/>
</dbReference>
<dbReference type="SUPFAM" id="SSF52418">
    <property type="entry name" value="Nucleoside phosphorylase/phosphoribosyltransferase catalytic domain"/>
    <property type="match status" value="1"/>
</dbReference>
<dbReference type="SUPFAM" id="SSF47648">
    <property type="entry name" value="Nucleoside phosphorylase/phosphoribosyltransferase N-terminal domain"/>
    <property type="match status" value="1"/>
</dbReference>
<name>TRPD_SULAC</name>
<keyword id="KW-0028">Amino-acid biosynthesis</keyword>
<keyword id="KW-0057">Aromatic amino acid biosynthesis</keyword>
<keyword id="KW-0328">Glycosyltransferase</keyword>
<keyword id="KW-0460">Magnesium</keyword>
<keyword id="KW-0479">Metal-binding</keyword>
<keyword id="KW-1185">Reference proteome</keyword>
<keyword id="KW-0808">Transferase</keyword>
<keyword id="KW-0822">Tryptophan biosynthesis</keyword>
<sequence>MKKIVFEKRDLSTEDSEAIANALMKGEIPEIQVSALLTSLAMKGESFEEIVGFARAMRNNAIKISYPEALDTAGTGGDGLGTINVSTITAIILSQLFPVAKHGNRSVSGKSGSADVLEALGYNINIAPELANKLIKENNFVFLFAQIYHPAMKNVANVRKTLGIRTIFNLLGPLTNPAGTRYQLIGLFSSKVMDIVAKAASLLDYKKVFIYHGEPGIDEISPYGYTTVYEITNGKIQQYRLHYSDFGLKRQIPIEKITATSANESAIKILRGVMGIDSDIRDFIGINVAVGLKLIGKAEDARDGFEYAMQLMESTIQHLRRIIESNGDIKKFDQLVRQVGKG</sequence>
<accession>Q4J8X7</accession>
<feature type="chain" id="PRO_0000154522" description="Anthranilate phosphoribosyltransferase">
    <location>
        <begin position="1"/>
        <end position="342"/>
    </location>
</feature>
<feature type="binding site" evidence="1">
    <location>
        <position position="74"/>
    </location>
    <ligand>
        <name>5-phospho-alpha-D-ribose 1-diphosphate</name>
        <dbReference type="ChEBI" id="CHEBI:58017"/>
    </ligand>
</feature>
<feature type="binding site" evidence="1">
    <location>
        <position position="74"/>
    </location>
    <ligand>
        <name>anthranilate</name>
        <dbReference type="ChEBI" id="CHEBI:16567"/>
        <label>1</label>
    </ligand>
</feature>
<feature type="binding site" evidence="1">
    <location>
        <begin position="77"/>
        <end position="78"/>
    </location>
    <ligand>
        <name>5-phospho-alpha-D-ribose 1-diphosphate</name>
        <dbReference type="ChEBI" id="CHEBI:58017"/>
    </ligand>
</feature>
<feature type="binding site" evidence="1">
    <location>
        <position position="82"/>
    </location>
    <ligand>
        <name>5-phospho-alpha-D-ribose 1-diphosphate</name>
        <dbReference type="ChEBI" id="CHEBI:58017"/>
    </ligand>
</feature>
<feature type="binding site" evidence="1">
    <location>
        <begin position="84"/>
        <end position="87"/>
    </location>
    <ligand>
        <name>5-phospho-alpha-D-ribose 1-diphosphate</name>
        <dbReference type="ChEBI" id="CHEBI:58017"/>
    </ligand>
</feature>
<feature type="binding site" evidence="1">
    <location>
        <position position="86"/>
    </location>
    <ligand>
        <name>Mg(2+)</name>
        <dbReference type="ChEBI" id="CHEBI:18420"/>
        <label>1</label>
    </ligand>
</feature>
<feature type="binding site" evidence="1">
    <location>
        <begin position="101"/>
        <end position="109"/>
    </location>
    <ligand>
        <name>5-phospho-alpha-D-ribose 1-diphosphate</name>
        <dbReference type="ChEBI" id="CHEBI:58017"/>
    </ligand>
</feature>
<feature type="binding site" evidence="1">
    <location>
        <position position="104"/>
    </location>
    <ligand>
        <name>anthranilate</name>
        <dbReference type="ChEBI" id="CHEBI:16567"/>
        <label>1</label>
    </ligand>
</feature>
<feature type="binding site" evidence="1">
    <location>
        <position position="113"/>
    </location>
    <ligand>
        <name>5-phospho-alpha-D-ribose 1-diphosphate</name>
        <dbReference type="ChEBI" id="CHEBI:58017"/>
    </ligand>
</feature>
<feature type="binding site" evidence="1">
    <location>
        <position position="159"/>
    </location>
    <ligand>
        <name>anthranilate</name>
        <dbReference type="ChEBI" id="CHEBI:16567"/>
        <label>2</label>
    </ligand>
</feature>
<feature type="binding site" evidence="1">
    <location>
        <position position="218"/>
    </location>
    <ligand>
        <name>Mg(2+)</name>
        <dbReference type="ChEBI" id="CHEBI:18420"/>
        <label>2</label>
    </ligand>
</feature>
<feature type="binding site" evidence="1">
    <location>
        <position position="219"/>
    </location>
    <ligand>
        <name>Mg(2+)</name>
        <dbReference type="ChEBI" id="CHEBI:18420"/>
        <label>1</label>
    </ligand>
</feature>
<feature type="binding site" evidence="1">
    <location>
        <position position="219"/>
    </location>
    <ligand>
        <name>Mg(2+)</name>
        <dbReference type="ChEBI" id="CHEBI:18420"/>
        <label>2</label>
    </ligand>
</feature>
<reference key="1">
    <citation type="journal article" date="2005" name="J. Bacteriol.">
        <title>The genome of Sulfolobus acidocaldarius, a model organism of the Crenarchaeota.</title>
        <authorList>
            <person name="Chen L."/>
            <person name="Bruegger K."/>
            <person name="Skovgaard M."/>
            <person name="Redder P."/>
            <person name="She Q."/>
            <person name="Torarinsson E."/>
            <person name="Greve B."/>
            <person name="Awayez M."/>
            <person name="Zibat A."/>
            <person name="Klenk H.-P."/>
            <person name="Garrett R.A."/>
        </authorList>
    </citation>
    <scope>NUCLEOTIDE SEQUENCE [LARGE SCALE GENOMIC DNA]</scope>
    <source>
        <strain>ATCC 33909 / DSM 639 / JCM 8929 / NBRC 15157 / NCIMB 11770</strain>
    </source>
</reference>
<gene>
    <name evidence="1" type="primary">trpD</name>
    <name type="ordered locus">Saci_1423</name>
</gene>
<organism>
    <name type="scientific">Sulfolobus acidocaldarius (strain ATCC 33909 / DSM 639 / JCM 8929 / NBRC 15157 / NCIMB 11770)</name>
    <dbReference type="NCBI Taxonomy" id="330779"/>
    <lineage>
        <taxon>Archaea</taxon>
        <taxon>Thermoproteota</taxon>
        <taxon>Thermoprotei</taxon>
        <taxon>Sulfolobales</taxon>
        <taxon>Sulfolobaceae</taxon>
        <taxon>Sulfolobus</taxon>
    </lineage>
</organism>
<comment type="function">
    <text evidence="1">Catalyzes the transfer of the phosphoribosyl group of 5-phosphorylribose-1-pyrophosphate (PRPP) to anthranilate to yield N-(5'-phosphoribosyl)-anthranilate (PRA).</text>
</comment>
<comment type="catalytic activity">
    <reaction evidence="1">
        <text>N-(5-phospho-beta-D-ribosyl)anthranilate + diphosphate = 5-phospho-alpha-D-ribose 1-diphosphate + anthranilate</text>
        <dbReference type="Rhea" id="RHEA:11768"/>
        <dbReference type="ChEBI" id="CHEBI:16567"/>
        <dbReference type="ChEBI" id="CHEBI:18277"/>
        <dbReference type="ChEBI" id="CHEBI:33019"/>
        <dbReference type="ChEBI" id="CHEBI:58017"/>
        <dbReference type="EC" id="2.4.2.18"/>
    </reaction>
</comment>
<comment type="cofactor">
    <cofactor evidence="1">
        <name>Mg(2+)</name>
        <dbReference type="ChEBI" id="CHEBI:18420"/>
    </cofactor>
    <text evidence="1">Binds 2 magnesium ions per monomer.</text>
</comment>
<comment type="pathway">
    <text evidence="1">Amino-acid biosynthesis; L-tryptophan biosynthesis; L-tryptophan from chorismate: step 2/5.</text>
</comment>
<comment type="subunit">
    <text evidence="1">Homodimer.</text>
</comment>
<comment type="similarity">
    <text evidence="1">Belongs to the anthranilate phosphoribosyltransferase family.</text>
</comment>